<feature type="chain" id="PRO_0000296774" description="DNA-directed RNA polymerase subunit alpha">
    <location>
        <begin position="1"/>
        <end position="330"/>
    </location>
</feature>
<feature type="region of interest" description="Alpha N-terminal domain (alpha-NTD)" evidence="1">
    <location>
        <begin position="1"/>
        <end position="231"/>
    </location>
</feature>
<feature type="region of interest" description="Alpha C-terminal domain (alpha-CTD)" evidence="1">
    <location>
        <begin position="250"/>
        <end position="330"/>
    </location>
</feature>
<organism>
    <name type="scientific">Acidovorax sp. (strain JS42)</name>
    <dbReference type="NCBI Taxonomy" id="232721"/>
    <lineage>
        <taxon>Bacteria</taxon>
        <taxon>Pseudomonadati</taxon>
        <taxon>Pseudomonadota</taxon>
        <taxon>Betaproteobacteria</taxon>
        <taxon>Burkholderiales</taxon>
        <taxon>Comamonadaceae</taxon>
        <taxon>Acidovorax</taxon>
    </lineage>
</organism>
<accession>A1W333</accession>
<keyword id="KW-0240">DNA-directed RNA polymerase</keyword>
<keyword id="KW-0548">Nucleotidyltransferase</keyword>
<keyword id="KW-0804">Transcription</keyword>
<keyword id="KW-0808">Transferase</keyword>
<proteinExistence type="inferred from homology"/>
<protein>
    <recommendedName>
        <fullName evidence="1">DNA-directed RNA polymerase subunit alpha</fullName>
        <shortName evidence="1">RNAP subunit alpha</shortName>
        <ecNumber evidence="1">2.7.7.6</ecNumber>
    </recommendedName>
    <alternativeName>
        <fullName evidence="1">RNA polymerase subunit alpha</fullName>
    </alternativeName>
    <alternativeName>
        <fullName evidence="1">Transcriptase subunit alpha</fullName>
    </alternativeName>
</protein>
<name>RPOA_ACISJ</name>
<sequence>MQTNLLKPKAINVEQLGPNRAKVALEPFERGYGHTLGNAIRRVLLSSMVGYAATEVTIAGVLHEYSSIDGVQEDVVNILLNLKGVVFKLHNRDEVTLSLRKDGEGVVTARDIQTPHDVEIVNPEHVIATLSAGGKLDMQIKVEKGRGYVPGNLRRYADEATKSIGRIVLDASFSPVKRVSYTVESARVEQRTDLDKLVVEIETNGAITAEDAVRASAKILVEQLAVFAQLEGGELAAFDAPASSRGAATFDPILLRPVDELELTVRSANCLKAENIYYIGDLIQRTENELLKTPNLGRKSLNEIKEVLASRGLTLGMKLENWPPAGLDKR</sequence>
<dbReference type="EC" id="2.7.7.6" evidence="1"/>
<dbReference type="EMBL" id="CP000539">
    <property type="protein sequence ID" value="ABM40658.1"/>
    <property type="molecule type" value="Genomic_DNA"/>
</dbReference>
<dbReference type="SMR" id="A1W333"/>
<dbReference type="STRING" id="232721.Ajs_0406"/>
<dbReference type="KEGG" id="ajs:Ajs_0406"/>
<dbReference type="eggNOG" id="COG0202">
    <property type="taxonomic scope" value="Bacteria"/>
</dbReference>
<dbReference type="HOGENOM" id="CLU_053084_0_1_4"/>
<dbReference type="Proteomes" id="UP000000645">
    <property type="component" value="Chromosome"/>
</dbReference>
<dbReference type="GO" id="GO:0005737">
    <property type="term" value="C:cytoplasm"/>
    <property type="evidence" value="ECO:0007669"/>
    <property type="project" value="UniProtKB-ARBA"/>
</dbReference>
<dbReference type="GO" id="GO:0000428">
    <property type="term" value="C:DNA-directed RNA polymerase complex"/>
    <property type="evidence" value="ECO:0007669"/>
    <property type="project" value="UniProtKB-KW"/>
</dbReference>
<dbReference type="GO" id="GO:0003677">
    <property type="term" value="F:DNA binding"/>
    <property type="evidence" value="ECO:0007669"/>
    <property type="project" value="UniProtKB-UniRule"/>
</dbReference>
<dbReference type="GO" id="GO:0003899">
    <property type="term" value="F:DNA-directed RNA polymerase activity"/>
    <property type="evidence" value="ECO:0007669"/>
    <property type="project" value="UniProtKB-UniRule"/>
</dbReference>
<dbReference type="GO" id="GO:0046983">
    <property type="term" value="F:protein dimerization activity"/>
    <property type="evidence" value="ECO:0007669"/>
    <property type="project" value="InterPro"/>
</dbReference>
<dbReference type="GO" id="GO:0006351">
    <property type="term" value="P:DNA-templated transcription"/>
    <property type="evidence" value="ECO:0007669"/>
    <property type="project" value="UniProtKB-UniRule"/>
</dbReference>
<dbReference type="CDD" id="cd06928">
    <property type="entry name" value="RNAP_alpha_NTD"/>
    <property type="match status" value="1"/>
</dbReference>
<dbReference type="FunFam" id="1.10.150.20:FF:000001">
    <property type="entry name" value="DNA-directed RNA polymerase subunit alpha"/>
    <property type="match status" value="1"/>
</dbReference>
<dbReference type="FunFam" id="2.170.120.12:FF:000001">
    <property type="entry name" value="DNA-directed RNA polymerase subunit alpha"/>
    <property type="match status" value="1"/>
</dbReference>
<dbReference type="Gene3D" id="1.10.150.20">
    <property type="entry name" value="5' to 3' exonuclease, C-terminal subdomain"/>
    <property type="match status" value="1"/>
</dbReference>
<dbReference type="Gene3D" id="2.170.120.12">
    <property type="entry name" value="DNA-directed RNA polymerase, insert domain"/>
    <property type="match status" value="1"/>
</dbReference>
<dbReference type="Gene3D" id="3.30.1360.10">
    <property type="entry name" value="RNA polymerase, RBP11-like subunit"/>
    <property type="match status" value="1"/>
</dbReference>
<dbReference type="HAMAP" id="MF_00059">
    <property type="entry name" value="RNApol_bact_RpoA"/>
    <property type="match status" value="1"/>
</dbReference>
<dbReference type="InterPro" id="IPR011262">
    <property type="entry name" value="DNA-dir_RNA_pol_insert"/>
</dbReference>
<dbReference type="InterPro" id="IPR011263">
    <property type="entry name" value="DNA-dir_RNA_pol_RpoA/D/Rpb3"/>
</dbReference>
<dbReference type="InterPro" id="IPR011773">
    <property type="entry name" value="DNA-dir_RpoA"/>
</dbReference>
<dbReference type="InterPro" id="IPR036603">
    <property type="entry name" value="RBP11-like"/>
</dbReference>
<dbReference type="InterPro" id="IPR011260">
    <property type="entry name" value="RNAP_asu_C"/>
</dbReference>
<dbReference type="InterPro" id="IPR036643">
    <property type="entry name" value="RNApol_insert_sf"/>
</dbReference>
<dbReference type="NCBIfam" id="NF003513">
    <property type="entry name" value="PRK05182.1-2"/>
    <property type="match status" value="1"/>
</dbReference>
<dbReference type="NCBIfam" id="NF003519">
    <property type="entry name" value="PRK05182.2-5"/>
    <property type="match status" value="1"/>
</dbReference>
<dbReference type="NCBIfam" id="TIGR02027">
    <property type="entry name" value="rpoA"/>
    <property type="match status" value="1"/>
</dbReference>
<dbReference type="Pfam" id="PF01000">
    <property type="entry name" value="RNA_pol_A_bac"/>
    <property type="match status" value="1"/>
</dbReference>
<dbReference type="Pfam" id="PF03118">
    <property type="entry name" value="RNA_pol_A_CTD"/>
    <property type="match status" value="1"/>
</dbReference>
<dbReference type="Pfam" id="PF01193">
    <property type="entry name" value="RNA_pol_L"/>
    <property type="match status" value="1"/>
</dbReference>
<dbReference type="SMART" id="SM00662">
    <property type="entry name" value="RPOLD"/>
    <property type="match status" value="1"/>
</dbReference>
<dbReference type="SUPFAM" id="SSF47789">
    <property type="entry name" value="C-terminal domain of RNA polymerase alpha subunit"/>
    <property type="match status" value="1"/>
</dbReference>
<dbReference type="SUPFAM" id="SSF56553">
    <property type="entry name" value="Insert subdomain of RNA polymerase alpha subunit"/>
    <property type="match status" value="1"/>
</dbReference>
<dbReference type="SUPFAM" id="SSF55257">
    <property type="entry name" value="RBP11-like subunits of RNA polymerase"/>
    <property type="match status" value="1"/>
</dbReference>
<evidence type="ECO:0000255" key="1">
    <source>
        <dbReference type="HAMAP-Rule" id="MF_00059"/>
    </source>
</evidence>
<comment type="function">
    <text evidence="1">DNA-dependent RNA polymerase catalyzes the transcription of DNA into RNA using the four ribonucleoside triphosphates as substrates.</text>
</comment>
<comment type="catalytic activity">
    <reaction evidence="1">
        <text>RNA(n) + a ribonucleoside 5'-triphosphate = RNA(n+1) + diphosphate</text>
        <dbReference type="Rhea" id="RHEA:21248"/>
        <dbReference type="Rhea" id="RHEA-COMP:14527"/>
        <dbReference type="Rhea" id="RHEA-COMP:17342"/>
        <dbReference type="ChEBI" id="CHEBI:33019"/>
        <dbReference type="ChEBI" id="CHEBI:61557"/>
        <dbReference type="ChEBI" id="CHEBI:140395"/>
        <dbReference type="EC" id="2.7.7.6"/>
    </reaction>
</comment>
<comment type="subunit">
    <text evidence="1">Homodimer. The RNAP catalytic core consists of 2 alpha, 1 beta, 1 beta' and 1 omega subunit. When a sigma factor is associated with the core the holoenzyme is formed, which can initiate transcription.</text>
</comment>
<comment type="domain">
    <text evidence="1">The N-terminal domain is essential for RNAP assembly and basal transcription, whereas the C-terminal domain is involved in interaction with transcriptional regulators and with upstream promoter elements.</text>
</comment>
<comment type="similarity">
    <text evidence="1">Belongs to the RNA polymerase alpha chain family.</text>
</comment>
<reference key="1">
    <citation type="submission" date="2006-12" db="EMBL/GenBank/DDBJ databases">
        <title>Complete sequence of chromosome 1 of Acidovorax sp. JS42.</title>
        <authorList>
            <person name="Copeland A."/>
            <person name="Lucas S."/>
            <person name="Lapidus A."/>
            <person name="Barry K."/>
            <person name="Detter J.C."/>
            <person name="Glavina del Rio T."/>
            <person name="Dalin E."/>
            <person name="Tice H."/>
            <person name="Pitluck S."/>
            <person name="Chertkov O."/>
            <person name="Brettin T."/>
            <person name="Bruce D."/>
            <person name="Han C."/>
            <person name="Tapia R."/>
            <person name="Gilna P."/>
            <person name="Schmutz J."/>
            <person name="Larimer F."/>
            <person name="Land M."/>
            <person name="Hauser L."/>
            <person name="Kyrpides N."/>
            <person name="Kim E."/>
            <person name="Stahl D."/>
            <person name="Richardson P."/>
        </authorList>
    </citation>
    <scope>NUCLEOTIDE SEQUENCE [LARGE SCALE GENOMIC DNA]</scope>
    <source>
        <strain>JS42</strain>
    </source>
</reference>
<gene>
    <name evidence="1" type="primary">rpoA</name>
    <name type="ordered locus">Ajs_0406</name>
</gene>